<reference key="1">
    <citation type="submission" date="2007-05" db="EMBL/GenBank/DDBJ databases">
        <title>Complete sequence of chromosome of Psychrobacter sp. PRwf-1.</title>
        <authorList>
            <consortium name="US DOE Joint Genome Institute"/>
            <person name="Copeland A."/>
            <person name="Lucas S."/>
            <person name="Lapidus A."/>
            <person name="Barry K."/>
            <person name="Detter J.C."/>
            <person name="Glavina del Rio T."/>
            <person name="Hammon N."/>
            <person name="Israni S."/>
            <person name="Dalin E."/>
            <person name="Tice H."/>
            <person name="Pitluck S."/>
            <person name="Chain P."/>
            <person name="Malfatti S."/>
            <person name="Shin M."/>
            <person name="Vergez L."/>
            <person name="Schmutz J."/>
            <person name="Larimer F."/>
            <person name="Land M."/>
            <person name="Hauser L."/>
            <person name="Kyrpides N."/>
            <person name="Kim E."/>
            <person name="Tiedje J."/>
            <person name="Richardson P."/>
        </authorList>
    </citation>
    <scope>NUCLEOTIDE SEQUENCE [LARGE SCALE GENOMIC DNA]</scope>
    <source>
        <strain>PRwf-1</strain>
    </source>
</reference>
<sequence length="191" mass="21554">MSIKSDRWIRKMAEEHGMIEPYEPGQVRFNEAGDKLVSYGTSSYGYDVRCAREFKVFTNVHSAIVDPKNFDENSFIDIVGDECIIPPNSFALARTVEYFRIPRDVLTICLGKSTYARCGIIVNVTPLEPEWEGHVTLEFSNTTTLPARIYAGEGVAQMLFFQSDADDICETSYKDRGGKYQGQRGVTLPRT</sequence>
<protein>
    <recommendedName>
        <fullName evidence="1">dCTP deaminase</fullName>
        <ecNumber evidence="1">3.5.4.13</ecNumber>
    </recommendedName>
    <alternativeName>
        <fullName evidence="1">Deoxycytidine triphosphate deaminase</fullName>
    </alternativeName>
</protein>
<name>DCD_PSYWF</name>
<organism>
    <name type="scientific">Psychrobacter sp. (strain PRwf-1)</name>
    <dbReference type="NCBI Taxonomy" id="349106"/>
    <lineage>
        <taxon>Bacteria</taxon>
        <taxon>Pseudomonadati</taxon>
        <taxon>Pseudomonadota</taxon>
        <taxon>Gammaproteobacteria</taxon>
        <taxon>Moraxellales</taxon>
        <taxon>Moraxellaceae</taxon>
        <taxon>Psychrobacter</taxon>
    </lineage>
</organism>
<evidence type="ECO:0000255" key="1">
    <source>
        <dbReference type="HAMAP-Rule" id="MF_00146"/>
    </source>
</evidence>
<comment type="function">
    <text evidence="1">Catalyzes the deamination of dCTP to dUTP.</text>
</comment>
<comment type="catalytic activity">
    <reaction evidence="1">
        <text>dCTP + H2O + H(+) = dUTP + NH4(+)</text>
        <dbReference type="Rhea" id="RHEA:22680"/>
        <dbReference type="ChEBI" id="CHEBI:15377"/>
        <dbReference type="ChEBI" id="CHEBI:15378"/>
        <dbReference type="ChEBI" id="CHEBI:28938"/>
        <dbReference type="ChEBI" id="CHEBI:61481"/>
        <dbReference type="ChEBI" id="CHEBI:61555"/>
        <dbReference type="EC" id="3.5.4.13"/>
    </reaction>
</comment>
<comment type="pathway">
    <text evidence="1">Pyrimidine metabolism; dUMP biosynthesis; dUMP from dCTP (dUTP route): step 1/2.</text>
</comment>
<comment type="subunit">
    <text evidence="1">Homotrimer.</text>
</comment>
<comment type="similarity">
    <text evidence="1">Belongs to the dCTP deaminase family.</text>
</comment>
<proteinExistence type="inferred from homology"/>
<accession>A5WG49</accession>
<dbReference type="EC" id="3.5.4.13" evidence="1"/>
<dbReference type="EMBL" id="CP000713">
    <property type="protein sequence ID" value="ABQ94640.1"/>
    <property type="molecule type" value="Genomic_DNA"/>
</dbReference>
<dbReference type="SMR" id="A5WG49"/>
<dbReference type="STRING" id="349106.PsycPRwf_1700"/>
<dbReference type="KEGG" id="prw:PsycPRwf_1700"/>
<dbReference type="eggNOG" id="COG0717">
    <property type="taxonomic scope" value="Bacteria"/>
</dbReference>
<dbReference type="HOGENOM" id="CLU_087476_4_0_6"/>
<dbReference type="UniPathway" id="UPA00610">
    <property type="reaction ID" value="UER00665"/>
</dbReference>
<dbReference type="GO" id="GO:0008829">
    <property type="term" value="F:dCTP deaminase activity"/>
    <property type="evidence" value="ECO:0007669"/>
    <property type="project" value="UniProtKB-UniRule"/>
</dbReference>
<dbReference type="GO" id="GO:0000166">
    <property type="term" value="F:nucleotide binding"/>
    <property type="evidence" value="ECO:0007669"/>
    <property type="project" value="UniProtKB-KW"/>
</dbReference>
<dbReference type="GO" id="GO:0006226">
    <property type="term" value="P:dUMP biosynthetic process"/>
    <property type="evidence" value="ECO:0007669"/>
    <property type="project" value="UniProtKB-UniPathway"/>
</dbReference>
<dbReference type="GO" id="GO:0006229">
    <property type="term" value="P:dUTP biosynthetic process"/>
    <property type="evidence" value="ECO:0007669"/>
    <property type="project" value="UniProtKB-UniRule"/>
</dbReference>
<dbReference type="GO" id="GO:0015949">
    <property type="term" value="P:nucleobase-containing small molecule interconversion"/>
    <property type="evidence" value="ECO:0007669"/>
    <property type="project" value="TreeGrafter"/>
</dbReference>
<dbReference type="CDD" id="cd07557">
    <property type="entry name" value="trimeric_dUTPase"/>
    <property type="match status" value="1"/>
</dbReference>
<dbReference type="FunFam" id="2.70.40.10:FF:000001">
    <property type="entry name" value="dCTP deaminase"/>
    <property type="match status" value="1"/>
</dbReference>
<dbReference type="Gene3D" id="2.70.40.10">
    <property type="match status" value="1"/>
</dbReference>
<dbReference type="HAMAP" id="MF_00146">
    <property type="entry name" value="dCTP_deaminase"/>
    <property type="match status" value="1"/>
</dbReference>
<dbReference type="InterPro" id="IPR011962">
    <property type="entry name" value="dCTP_deaminase"/>
</dbReference>
<dbReference type="InterPro" id="IPR036157">
    <property type="entry name" value="dUTPase-like_sf"/>
</dbReference>
<dbReference type="InterPro" id="IPR033704">
    <property type="entry name" value="dUTPase_trimeric"/>
</dbReference>
<dbReference type="NCBIfam" id="TIGR02274">
    <property type="entry name" value="dCTP_deam"/>
    <property type="match status" value="1"/>
</dbReference>
<dbReference type="PANTHER" id="PTHR42680">
    <property type="entry name" value="DCTP DEAMINASE"/>
    <property type="match status" value="1"/>
</dbReference>
<dbReference type="PANTHER" id="PTHR42680:SF3">
    <property type="entry name" value="DCTP DEAMINASE"/>
    <property type="match status" value="1"/>
</dbReference>
<dbReference type="Pfam" id="PF22769">
    <property type="entry name" value="DCD"/>
    <property type="match status" value="1"/>
</dbReference>
<dbReference type="SUPFAM" id="SSF51283">
    <property type="entry name" value="dUTPase-like"/>
    <property type="match status" value="1"/>
</dbReference>
<keyword id="KW-0378">Hydrolase</keyword>
<keyword id="KW-0546">Nucleotide metabolism</keyword>
<keyword id="KW-0547">Nucleotide-binding</keyword>
<feature type="chain" id="PRO_1000071478" description="dCTP deaminase">
    <location>
        <begin position="1"/>
        <end position="191"/>
    </location>
</feature>
<feature type="active site" description="Proton donor/acceptor" evidence="1">
    <location>
        <position position="138"/>
    </location>
</feature>
<feature type="binding site" evidence="1">
    <location>
        <begin position="112"/>
        <end position="117"/>
    </location>
    <ligand>
        <name>dCTP</name>
        <dbReference type="ChEBI" id="CHEBI:61481"/>
    </ligand>
</feature>
<feature type="binding site" evidence="1">
    <location>
        <begin position="136"/>
        <end position="138"/>
    </location>
    <ligand>
        <name>dCTP</name>
        <dbReference type="ChEBI" id="CHEBI:61481"/>
    </ligand>
</feature>
<feature type="binding site" evidence="1">
    <location>
        <position position="157"/>
    </location>
    <ligand>
        <name>dCTP</name>
        <dbReference type="ChEBI" id="CHEBI:61481"/>
    </ligand>
</feature>
<feature type="binding site" evidence="1">
    <location>
        <position position="173"/>
    </location>
    <ligand>
        <name>dCTP</name>
        <dbReference type="ChEBI" id="CHEBI:61481"/>
    </ligand>
</feature>
<feature type="binding site" evidence="1">
    <location>
        <position position="183"/>
    </location>
    <ligand>
        <name>dCTP</name>
        <dbReference type="ChEBI" id="CHEBI:61481"/>
    </ligand>
</feature>
<gene>
    <name evidence="1" type="primary">dcd</name>
    <name type="ordered locus">PsycPRwf_1700</name>
</gene>